<gene>
    <name evidence="1" type="primary">buk</name>
    <name type="ordered locus">BCQ_3951</name>
</gene>
<sequence length="367" mass="40010">MSVNRILVINPGSTSTKIGVFDNERPVLEETIRHDEEQIGKYKRIIDQYEFRKETILEVLHSHGINISKLNAVCGRGGLLRPIEGGTYTVNDAMLEDLKNGFSGHHASNLGGILAYEIASGLNIPAFIVDPVVVDEMEPIARISGIAGMERKSIFHALNQKAVARKVAEQLNHKYEDLNLLVTHMGGGITVGAHKKGRVIDVNNGLNGEGPFSPERAGTVPVGQLVEMCFSGEYYRDEMIKKLVGQGGLVSLIGTNDAIKVEQMVEKGDPEATLIYKAMAYQVAKEIGGASAVLHGKIDAIVLTGGLAYSKILVDEIKERVDWIADVIVHPGEDELQALAEGALRVLREEEAPKEYIVREKETVARG</sequence>
<accession>B9IXF8</accession>
<proteinExistence type="inferred from homology"/>
<organism>
    <name type="scientific">Bacillus cereus (strain Q1)</name>
    <dbReference type="NCBI Taxonomy" id="361100"/>
    <lineage>
        <taxon>Bacteria</taxon>
        <taxon>Bacillati</taxon>
        <taxon>Bacillota</taxon>
        <taxon>Bacilli</taxon>
        <taxon>Bacillales</taxon>
        <taxon>Bacillaceae</taxon>
        <taxon>Bacillus</taxon>
        <taxon>Bacillus cereus group</taxon>
    </lineage>
</organism>
<reference key="1">
    <citation type="journal article" date="2009" name="J. Bacteriol.">
        <title>Complete genome sequence of the extremophilic Bacillus cereus strain Q1 with industrial applications.</title>
        <authorList>
            <person name="Xiong Z."/>
            <person name="Jiang Y."/>
            <person name="Qi D."/>
            <person name="Lu H."/>
            <person name="Yang F."/>
            <person name="Yang J."/>
            <person name="Chen L."/>
            <person name="Sun L."/>
            <person name="Xu X."/>
            <person name="Xue Y."/>
            <person name="Zhu Y."/>
            <person name="Jin Q."/>
        </authorList>
    </citation>
    <scope>NUCLEOTIDE SEQUENCE [LARGE SCALE GENOMIC DNA]</scope>
    <source>
        <strain>Q1</strain>
    </source>
</reference>
<protein>
    <recommendedName>
        <fullName evidence="1">Probable butyrate kinase</fullName>
        <shortName evidence="1">BK</shortName>
        <ecNumber evidence="1">2.7.2.7</ecNumber>
    </recommendedName>
    <alternativeName>
        <fullName evidence="1">Branched-chain carboxylic acid kinase</fullName>
    </alternativeName>
</protein>
<evidence type="ECO:0000255" key="1">
    <source>
        <dbReference type="HAMAP-Rule" id="MF_00542"/>
    </source>
</evidence>
<comment type="catalytic activity">
    <reaction evidence="1">
        <text>butanoate + ATP = butanoyl phosphate + ADP</text>
        <dbReference type="Rhea" id="RHEA:13585"/>
        <dbReference type="ChEBI" id="CHEBI:17968"/>
        <dbReference type="ChEBI" id="CHEBI:30616"/>
        <dbReference type="ChEBI" id="CHEBI:58079"/>
        <dbReference type="ChEBI" id="CHEBI:456216"/>
        <dbReference type="EC" id="2.7.2.7"/>
    </reaction>
</comment>
<comment type="subcellular location">
    <subcellularLocation>
        <location evidence="1">Cytoplasm</location>
    </subcellularLocation>
</comment>
<comment type="similarity">
    <text evidence="1">Belongs to the acetokinase family.</text>
</comment>
<keyword id="KW-0067">ATP-binding</keyword>
<keyword id="KW-0963">Cytoplasm</keyword>
<keyword id="KW-0418">Kinase</keyword>
<keyword id="KW-0547">Nucleotide-binding</keyword>
<keyword id="KW-0808">Transferase</keyword>
<dbReference type="EC" id="2.7.2.7" evidence="1"/>
<dbReference type="EMBL" id="CP000227">
    <property type="protein sequence ID" value="ACM14379.1"/>
    <property type="molecule type" value="Genomic_DNA"/>
</dbReference>
<dbReference type="SMR" id="B9IXF8"/>
<dbReference type="KEGG" id="bcq:BCQ_3951"/>
<dbReference type="HOGENOM" id="CLU_048716_0_0_9"/>
<dbReference type="Proteomes" id="UP000000441">
    <property type="component" value="Chromosome"/>
</dbReference>
<dbReference type="GO" id="GO:0005737">
    <property type="term" value="C:cytoplasm"/>
    <property type="evidence" value="ECO:0007669"/>
    <property type="project" value="UniProtKB-SubCell"/>
</dbReference>
<dbReference type="GO" id="GO:0008776">
    <property type="term" value="F:acetate kinase activity"/>
    <property type="evidence" value="ECO:0007669"/>
    <property type="project" value="TreeGrafter"/>
</dbReference>
<dbReference type="GO" id="GO:0005524">
    <property type="term" value="F:ATP binding"/>
    <property type="evidence" value="ECO:0007669"/>
    <property type="project" value="UniProtKB-KW"/>
</dbReference>
<dbReference type="GO" id="GO:0047761">
    <property type="term" value="F:butyrate kinase activity"/>
    <property type="evidence" value="ECO:0007669"/>
    <property type="project" value="UniProtKB-UniRule"/>
</dbReference>
<dbReference type="GO" id="GO:0006083">
    <property type="term" value="P:acetate metabolic process"/>
    <property type="evidence" value="ECO:0007669"/>
    <property type="project" value="TreeGrafter"/>
</dbReference>
<dbReference type="CDD" id="cd24011">
    <property type="entry name" value="ASKHA_NBD_BK"/>
    <property type="match status" value="1"/>
</dbReference>
<dbReference type="Gene3D" id="3.30.420.40">
    <property type="match status" value="2"/>
</dbReference>
<dbReference type="HAMAP" id="MF_00542">
    <property type="entry name" value="Butyrate_kinase"/>
    <property type="match status" value="1"/>
</dbReference>
<dbReference type="InterPro" id="IPR000890">
    <property type="entry name" value="Aliphatic_acid_kin_short-chain"/>
</dbReference>
<dbReference type="InterPro" id="IPR023865">
    <property type="entry name" value="Aliphatic_acid_kinase_CS"/>
</dbReference>
<dbReference type="InterPro" id="IPR043129">
    <property type="entry name" value="ATPase_NBD"/>
</dbReference>
<dbReference type="InterPro" id="IPR011245">
    <property type="entry name" value="Butyrate_kin"/>
</dbReference>
<dbReference type="NCBIfam" id="TIGR02707">
    <property type="entry name" value="butyr_kinase"/>
    <property type="match status" value="1"/>
</dbReference>
<dbReference type="NCBIfam" id="NF002834">
    <property type="entry name" value="PRK03011.1-5"/>
    <property type="match status" value="1"/>
</dbReference>
<dbReference type="PANTHER" id="PTHR21060">
    <property type="entry name" value="ACETATE KINASE"/>
    <property type="match status" value="1"/>
</dbReference>
<dbReference type="PANTHER" id="PTHR21060:SF3">
    <property type="entry name" value="BUTYRATE KINASE 2-RELATED"/>
    <property type="match status" value="1"/>
</dbReference>
<dbReference type="Pfam" id="PF00871">
    <property type="entry name" value="Acetate_kinase"/>
    <property type="match status" value="1"/>
</dbReference>
<dbReference type="PIRSF" id="PIRSF036458">
    <property type="entry name" value="Butyrate_kin"/>
    <property type="match status" value="1"/>
</dbReference>
<dbReference type="PRINTS" id="PR00471">
    <property type="entry name" value="ACETATEKNASE"/>
</dbReference>
<dbReference type="SUPFAM" id="SSF53067">
    <property type="entry name" value="Actin-like ATPase domain"/>
    <property type="match status" value="2"/>
</dbReference>
<dbReference type="PROSITE" id="PS01075">
    <property type="entry name" value="ACETATE_KINASE_1"/>
    <property type="match status" value="1"/>
</dbReference>
<dbReference type="PROSITE" id="PS01076">
    <property type="entry name" value="ACETATE_KINASE_2"/>
    <property type="match status" value="1"/>
</dbReference>
<feature type="chain" id="PRO_1000146588" description="Probable butyrate kinase">
    <location>
        <begin position="1"/>
        <end position="367"/>
    </location>
</feature>
<name>BUK_BACCQ</name>